<keyword id="KW-0119">Carbohydrate metabolism</keyword>
<keyword id="KW-0320">Glycogen biosynthesis</keyword>
<keyword id="KW-0321">Glycogen metabolism</keyword>
<keyword id="KW-0328">Glycosyltransferase</keyword>
<keyword id="KW-0808">Transferase</keyword>
<accession>Q3KD78</accession>
<dbReference type="EC" id="2.4.1.18" evidence="1"/>
<dbReference type="EMBL" id="CP000094">
    <property type="protein sequence ID" value="ABA74277.1"/>
    <property type="molecule type" value="Genomic_DNA"/>
</dbReference>
<dbReference type="RefSeq" id="WP_011333955.1">
    <property type="nucleotide sequence ID" value="NC_007492.2"/>
</dbReference>
<dbReference type="SMR" id="Q3KD78"/>
<dbReference type="CAZy" id="CBM48">
    <property type="family name" value="Carbohydrate-Binding Module Family 48"/>
</dbReference>
<dbReference type="CAZy" id="GH13">
    <property type="family name" value="Glycoside Hydrolase Family 13"/>
</dbReference>
<dbReference type="KEGG" id="pfo:Pfl01_2536"/>
<dbReference type="eggNOG" id="COG0296">
    <property type="taxonomic scope" value="Bacteria"/>
</dbReference>
<dbReference type="HOGENOM" id="CLU_004245_3_2_6"/>
<dbReference type="UniPathway" id="UPA00164"/>
<dbReference type="Proteomes" id="UP000002704">
    <property type="component" value="Chromosome"/>
</dbReference>
<dbReference type="GO" id="GO:0005829">
    <property type="term" value="C:cytosol"/>
    <property type="evidence" value="ECO:0007669"/>
    <property type="project" value="TreeGrafter"/>
</dbReference>
<dbReference type="GO" id="GO:0003844">
    <property type="term" value="F:1,4-alpha-glucan branching enzyme activity"/>
    <property type="evidence" value="ECO:0007669"/>
    <property type="project" value="UniProtKB-UniRule"/>
</dbReference>
<dbReference type="GO" id="GO:0043169">
    <property type="term" value="F:cation binding"/>
    <property type="evidence" value="ECO:0007669"/>
    <property type="project" value="InterPro"/>
</dbReference>
<dbReference type="GO" id="GO:0004553">
    <property type="term" value="F:hydrolase activity, hydrolyzing O-glycosyl compounds"/>
    <property type="evidence" value="ECO:0007669"/>
    <property type="project" value="InterPro"/>
</dbReference>
<dbReference type="GO" id="GO:0005978">
    <property type="term" value="P:glycogen biosynthetic process"/>
    <property type="evidence" value="ECO:0007669"/>
    <property type="project" value="UniProtKB-UniRule"/>
</dbReference>
<dbReference type="CDD" id="cd11322">
    <property type="entry name" value="AmyAc_Glg_BE"/>
    <property type="match status" value="1"/>
</dbReference>
<dbReference type="CDD" id="cd02855">
    <property type="entry name" value="E_set_GBE_prok_N"/>
    <property type="match status" value="1"/>
</dbReference>
<dbReference type="FunFam" id="2.60.40.10:FF:000169">
    <property type="entry name" value="1,4-alpha-glucan branching enzyme GlgB"/>
    <property type="match status" value="1"/>
</dbReference>
<dbReference type="FunFam" id="2.60.40.1180:FF:000002">
    <property type="entry name" value="1,4-alpha-glucan branching enzyme GlgB"/>
    <property type="match status" value="1"/>
</dbReference>
<dbReference type="FunFam" id="3.20.20.80:FF:000003">
    <property type="entry name" value="1,4-alpha-glucan branching enzyme GlgB"/>
    <property type="match status" value="1"/>
</dbReference>
<dbReference type="Gene3D" id="3.20.20.80">
    <property type="entry name" value="Glycosidases"/>
    <property type="match status" value="1"/>
</dbReference>
<dbReference type="Gene3D" id="2.60.40.1180">
    <property type="entry name" value="Golgi alpha-mannosidase II"/>
    <property type="match status" value="1"/>
</dbReference>
<dbReference type="Gene3D" id="2.60.40.10">
    <property type="entry name" value="Immunoglobulins"/>
    <property type="match status" value="1"/>
</dbReference>
<dbReference type="HAMAP" id="MF_00685">
    <property type="entry name" value="GlgB"/>
    <property type="match status" value="1"/>
</dbReference>
<dbReference type="InterPro" id="IPR006048">
    <property type="entry name" value="A-amylase/branching_C"/>
</dbReference>
<dbReference type="InterPro" id="IPR037439">
    <property type="entry name" value="Branching_enzy"/>
</dbReference>
<dbReference type="InterPro" id="IPR006407">
    <property type="entry name" value="GlgB"/>
</dbReference>
<dbReference type="InterPro" id="IPR054169">
    <property type="entry name" value="GlgB_N"/>
</dbReference>
<dbReference type="InterPro" id="IPR044143">
    <property type="entry name" value="GlgB_N_E_set_prok"/>
</dbReference>
<dbReference type="InterPro" id="IPR006047">
    <property type="entry name" value="Glyco_hydro_13_cat_dom"/>
</dbReference>
<dbReference type="InterPro" id="IPR004193">
    <property type="entry name" value="Glyco_hydro_13_N"/>
</dbReference>
<dbReference type="InterPro" id="IPR013780">
    <property type="entry name" value="Glyco_hydro_b"/>
</dbReference>
<dbReference type="InterPro" id="IPR017853">
    <property type="entry name" value="Glycoside_hydrolase_SF"/>
</dbReference>
<dbReference type="InterPro" id="IPR013783">
    <property type="entry name" value="Ig-like_fold"/>
</dbReference>
<dbReference type="InterPro" id="IPR014756">
    <property type="entry name" value="Ig_E-set"/>
</dbReference>
<dbReference type="NCBIfam" id="TIGR01515">
    <property type="entry name" value="branching_enzym"/>
    <property type="match status" value="1"/>
</dbReference>
<dbReference type="NCBIfam" id="NF003811">
    <property type="entry name" value="PRK05402.1"/>
    <property type="match status" value="1"/>
</dbReference>
<dbReference type="NCBIfam" id="NF008967">
    <property type="entry name" value="PRK12313.1"/>
    <property type="match status" value="1"/>
</dbReference>
<dbReference type="PANTHER" id="PTHR43651">
    <property type="entry name" value="1,4-ALPHA-GLUCAN-BRANCHING ENZYME"/>
    <property type="match status" value="1"/>
</dbReference>
<dbReference type="PANTHER" id="PTHR43651:SF3">
    <property type="entry name" value="1,4-ALPHA-GLUCAN-BRANCHING ENZYME"/>
    <property type="match status" value="1"/>
</dbReference>
<dbReference type="Pfam" id="PF00128">
    <property type="entry name" value="Alpha-amylase"/>
    <property type="match status" value="1"/>
</dbReference>
<dbReference type="Pfam" id="PF02806">
    <property type="entry name" value="Alpha-amylase_C"/>
    <property type="match status" value="1"/>
</dbReference>
<dbReference type="Pfam" id="PF02922">
    <property type="entry name" value="CBM_48"/>
    <property type="match status" value="1"/>
</dbReference>
<dbReference type="Pfam" id="PF22019">
    <property type="entry name" value="GlgB_N"/>
    <property type="match status" value="1"/>
</dbReference>
<dbReference type="PIRSF" id="PIRSF000463">
    <property type="entry name" value="GlgB"/>
    <property type="match status" value="1"/>
</dbReference>
<dbReference type="SMART" id="SM00642">
    <property type="entry name" value="Aamy"/>
    <property type="match status" value="1"/>
</dbReference>
<dbReference type="SUPFAM" id="SSF51445">
    <property type="entry name" value="(Trans)glycosidases"/>
    <property type="match status" value="1"/>
</dbReference>
<dbReference type="SUPFAM" id="SSF81296">
    <property type="entry name" value="E set domains"/>
    <property type="match status" value="2"/>
</dbReference>
<dbReference type="SUPFAM" id="SSF51011">
    <property type="entry name" value="Glycosyl hydrolase domain"/>
    <property type="match status" value="1"/>
</dbReference>
<reference key="1">
    <citation type="journal article" date="2009" name="Genome Biol.">
        <title>Genomic and genetic analyses of diversity and plant interactions of Pseudomonas fluorescens.</title>
        <authorList>
            <person name="Silby M.W."/>
            <person name="Cerdeno-Tarraga A.M."/>
            <person name="Vernikos G.S."/>
            <person name="Giddens S.R."/>
            <person name="Jackson R.W."/>
            <person name="Preston G.M."/>
            <person name="Zhang X.-X."/>
            <person name="Moon C.D."/>
            <person name="Gehrig S.M."/>
            <person name="Godfrey S.A.C."/>
            <person name="Knight C.G."/>
            <person name="Malone J.G."/>
            <person name="Robinson Z."/>
            <person name="Spiers A.J."/>
            <person name="Harris S."/>
            <person name="Challis G.L."/>
            <person name="Yaxley A.M."/>
            <person name="Harris D."/>
            <person name="Seeger K."/>
            <person name="Murphy L."/>
            <person name="Rutter S."/>
            <person name="Squares R."/>
            <person name="Quail M.A."/>
            <person name="Saunders E."/>
            <person name="Mavromatis K."/>
            <person name="Brettin T.S."/>
            <person name="Bentley S.D."/>
            <person name="Hothersall J."/>
            <person name="Stephens E."/>
            <person name="Thomas C.M."/>
            <person name="Parkhill J."/>
            <person name="Levy S.B."/>
            <person name="Rainey P.B."/>
            <person name="Thomson N.R."/>
        </authorList>
    </citation>
    <scope>NUCLEOTIDE SEQUENCE [LARGE SCALE GENOMIC DNA]</scope>
    <source>
        <strain>Pf0-1</strain>
    </source>
</reference>
<organism>
    <name type="scientific">Pseudomonas fluorescens (strain Pf0-1)</name>
    <dbReference type="NCBI Taxonomy" id="205922"/>
    <lineage>
        <taxon>Bacteria</taxon>
        <taxon>Pseudomonadati</taxon>
        <taxon>Pseudomonadota</taxon>
        <taxon>Gammaproteobacteria</taxon>
        <taxon>Pseudomonadales</taxon>
        <taxon>Pseudomonadaceae</taxon>
        <taxon>Pseudomonas</taxon>
    </lineage>
</organism>
<proteinExistence type="inferred from homology"/>
<gene>
    <name evidence="1" type="primary">glgB</name>
    <name type="ordered locus">Pfl01_2536</name>
</gene>
<sequence length="743" mass="83792">MSFSNREQGHAKERLLPTAKDIDALVRAEHHDPFSILGPHGDGAGGQFIRAYLPGALSVSVVDKNSGEELGPLEATETPGLFVGHFEGSRPYLLRTRWAGGEQVAEDPYSFGQLLGEMDLYLFAEGNHRDLSSCLGAQLKTVDGVDGVRFAVWAPNARRVSVVGDFNVWDGRRHPMRLRHPSGVWELFIPRLQAGELYKYEILGAHGILPLKADPMALATSLPPDTASKVASPLQIDWQDQDWMSGRRERQQHNAPLSIYELHAGSWQCELDDLGEVARQYTWPELAERLIPYVKELGFTHIELMPIMEHPFGGSWGYQLLSQFAPSARYGTPEQFGEFVNACHQAGIGVILDWVPAHFPTDTHGLAQFDGTALYEYGNPLEGFHQDWDTLIYNLGRTEVHGYMLASALHWLKHFHIDGLRVDAVASMLYRDYSRKAGEWVPNRHGGRENLEAIDFLRHLNDVVALEAPGALVIAEESTAWPGVSQSTQQGGLGFAYKWNMGWMHDSLHYIQQDPVYRAHHHNELSFGLVYAWSERFILPISHDEVVHGKHSLIDKMPGDRWQKFANLRAYLSFMWTHPGKKLLFMGCEFGQWREWNHDQQLDWYLLQYSEHKGVQKLVSDLNRLYREEPALHEQDDAPQGFQWLIGDDAINSVYAWLRWSKDGTPVLVVANFTPVPRQSYRVGVPFAGRWKELLNSDADTYAGSNYGNGGGAFTEEVASHGQALSLELNLPPLAVLILKPEV</sequence>
<feature type="chain" id="PRO_0000260678" description="1,4-alpha-glucan branching enzyme GlgB">
    <location>
        <begin position="1"/>
        <end position="743"/>
    </location>
</feature>
<feature type="active site" description="Nucleophile" evidence="1">
    <location>
        <position position="423"/>
    </location>
</feature>
<feature type="active site" description="Proton donor" evidence="1">
    <location>
        <position position="476"/>
    </location>
</feature>
<name>GLGB_PSEPF</name>
<comment type="function">
    <text evidence="1">Catalyzes the formation of the alpha-1,6-glucosidic linkages in glycogen by scission of a 1,4-alpha-linked oligosaccharide from growing alpha-1,4-glucan chains and the subsequent attachment of the oligosaccharide to the alpha-1,6 position.</text>
</comment>
<comment type="catalytic activity">
    <reaction evidence="1">
        <text>Transfers a segment of a (1-&gt;4)-alpha-D-glucan chain to a primary hydroxy group in a similar glucan chain.</text>
        <dbReference type="EC" id="2.4.1.18"/>
    </reaction>
</comment>
<comment type="pathway">
    <text evidence="1">Glycan biosynthesis; glycogen biosynthesis.</text>
</comment>
<comment type="subunit">
    <text evidence="1">Monomer.</text>
</comment>
<comment type="similarity">
    <text evidence="1">Belongs to the glycosyl hydrolase 13 family. GlgB subfamily.</text>
</comment>
<protein>
    <recommendedName>
        <fullName evidence="1">1,4-alpha-glucan branching enzyme GlgB</fullName>
        <ecNumber evidence="1">2.4.1.18</ecNumber>
    </recommendedName>
    <alternativeName>
        <fullName evidence="1">1,4-alpha-D-glucan:1,4-alpha-D-glucan 6-glucosyl-transferase</fullName>
    </alternativeName>
    <alternativeName>
        <fullName evidence="1">Alpha-(1-&gt;4)-glucan branching enzyme</fullName>
    </alternativeName>
    <alternativeName>
        <fullName evidence="1">Glycogen branching enzyme</fullName>
        <shortName evidence="1">BE</shortName>
    </alternativeName>
</protein>
<evidence type="ECO:0000255" key="1">
    <source>
        <dbReference type="HAMAP-Rule" id="MF_00685"/>
    </source>
</evidence>